<dbReference type="EC" id="2.1.1.33" evidence="2"/>
<dbReference type="EMBL" id="CP000942">
    <property type="protein sequence ID" value="ACA33200.1"/>
    <property type="molecule type" value="Genomic_DNA"/>
</dbReference>
<dbReference type="RefSeq" id="WP_006688874.1">
    <property type="nucleotide sequence ID" value="NC_010503.1"/>
</dbReference>
<dbReference type="SMR" id="B1AIQ8"/>
<dbReference type="GeneID" id="29672514"/>
<dbReference type="KEGG" id="upa:UPA3_0277"/>
<dbReference type="HOGENOM" id="CLU_050910_2_1_14"/>
<dbReference type="UniPathway" id="UPA00989"/>
<dbReference type="Proteomes" id="UP000002162">
    <property type="component" value="Chromosome"/>
</dbReference>
<dbReference type="GO" id="GO:0043527">
    <property type="term" value="C:tRNA methyltransferase complex"/>
    <property type="evidence" value="ECO:0007669"/>
    <property type="project" value="TreeGrafter"/>
</dbReference>
<dbReference type="GO" id="GO:0008176">
    <property type="term" value="F:tRNA (guanine(46)-N7)-methyltransferase activity"/>
    <property type="evidence" value="ECO:0007669"/>
    <property type="project" value="UniProtKB-UniRule"/>
</dbReference>
<dbReference type="Gene3D" id="3.40.50.150">
    <property type="entry name" value="Vaccinia Virus protein VP39"/>
    <property type="match status" value="1"/>
</dbReference>
<dbReference type="HAMAP" id="MF_01057">
    <property type="entry name" value="tRNA_methyltr_TrmB"/>
    <property type="match status" value="1"/>
</dbReference>
<dbReference type="InterPro" id="IPR029063">
    <property type="entry name" value="SAM-dependent_MTases_sf"/>
</dbReference>
<dbReference type="InterPro" id="IPR003358">
    <property type="entry name" value="tRNA_(Gua-N-7)_MeTrfase_Trmb"/>
</dbReference>
<dbReference type="InterPro" id="IPR055361">
    <property type="entry name" value="tRNA_methyltr_TrmB_bact"/>
</dbReference>
<dbReference type="NCBIfam" id="NF001080">
    <property type="entry name" value="PRK00121.2-2"/>
    <property type="match status" value="1"/>
</dbReference>
<dbReference type="NCBIfam" id="TIGR00091">
    <property type="entry name" value="tRNA (guanosine(46)-N7)-methyltransferase TrmB"/>
    <property type="match status" value="1"/>
</dbReference>
<dbReference type="PANTHER" id="PTHR23417">
    <property type="entry name" value="3-DEOXY-D-MANNO-OCTULOSONIC-ACID TRANSFERASE/TRNA GUANINE-N 7 - -METHYLTRANSFERASE"/>
    <property type="match status" value="1"/>
</dbReference>
<dbReference type="PANTHER" id="PTHR23417:SF14">
    <property type="entry name" value="PENTACOTRIPEPTIDE-REPEAT REGION OF PRORP DOMAIN-CONTAINING PROTEIN"/>
    <property type="match status" value="1"/>
</dbReference>
<dbReference type="Pfam" id="PF02390">
    <property type="entry name" value="Methyltransf_4"/>
    <property type="match status" value="1"/>
</dbReference>
<dbReference type="SUPFAM" id="SSF53335">
    <property type="entry name" value="S-adenosyl-L-methionine-dependent methyltransferases"/>
    <property type="match status" value="1"/>
</dbReference>
<dbReference type="PROSITE" id="PS51625">
    <property type="entry name" value="SAM_MT_TRMB"/>
    <property type="match status" value="1"/>
</dbReference>
<reference key="1">
    <citation type="submission" date="2008-02" db="EMBL/GenBank/DDBJ databases">
        <title>Genome sequence of Ureaplasma parvum serovar 3.</title>
        <authorList>
            <person name="Methe B.A."/>
            <person name="Glass J."/>
            <person name="Waites K."/>
            <person name="Shrivastava S."/>
        </authorList>
    </citation>
    <scope>NUCLEOTIDE SEQUENCE [LARGE SCALE GENOMIC DNA]</scope>
    <source>
        <strain>ATCC 27815 / 27 / NCTC 11736</strain>
    </source>
</reference>
<proteinExistence type="inferred from homology"/>
<feature type="chain" id="PRO_1000084454" description="tRNA (guanine-N(7)-)-methyltransferase">
    <location>
        <begin position="1"/>
        <end position="224"/>
    </location>
</feature>
<feature type="active site" evidence="1">
    <location>
        <position position="119"/>
    </location>
</feature>
<feature type="binding site" evidence="2">
    <location>
        <position position="45"/>
    </location>
    <ligand>
        <name>S-adenosyl-L-methionine</name>
        <dbReference type="ChEBI" id="CHEBI:59789"/>
    </ligand>
</feature>
<feature type="binding site" evidence="2">
    <location>
        <position position="70"/>
    </location>
    <ligand>
        <name>S-adenosyl-L-methionine</name>
        <dbReference type="ChEBI" id="CHEBI:59789"/>
    </ligand>
</feature>
<feature type="binding site" evidence="2">
    <location>
        <position position="97"/>
    </location>
    <ligand>
        <name>S-adenosyl-L-methionine</name>
        <dbReference type="ChEBI" id="CHEBI:59789"/>
    </ligand>
</feature>
<feature type="binding site" evidence="2">
    <location>
        <position position="119"/>
    </location>
    <ligand>
        <name>S-adenosyl-L-methionine</name>
        <dbReference type="ChEBI" id="CHEBI:59789"/>
    </ligand>
</feature>
<feature type="binding site" evidence="2">
    <location>
        <position position="123"/>
    </location>
    <ligand>
        <name>substrate</name>
    </ligand>
</feature>
<feature type="binding site" evidence="2">
    <location>
        <position position="155"/>
    </location>
    <ligand>
        <name>substrate</name>
    </ligand>
</feature>
<feature type="binding site" evidence="2">
    <location>
        <begin position="199"/>
        <end position="202"/>
    </location>
    <ligand>
        <name>substrate</name>
    </ligand>
</feature>
<keyword id="KW-0489">Methyltransferase</keyword>
<keyword id="KW-0949">S-adenosyl-L-methionine</keyword>
<keyword id="KW-0808">Transferase</keyword>
<keyword id="KW-0819">tRNA processing</keyword>
<sequence length="224" mass="26494">MRLRNNANAPLYLKSQHEYIINDPHLLKDNLGKIFKNPELPLYIEIGMGKGDFIIENALRNQQINYLGIEKFPTVIVKAHKKALKHKLDNLAMICFDANKILELLNSESVDKIYLNFSDPWPKKRHAKKRLTHPCFLEKFAVILKQNALVEFKTDNENLFMYTIYDVLLKDLTKYEILFLTYNLYTLVNNVELLKNIPTEYEKKFVMQGERIKKVNFRFLKNNQ</sequence>
<name>TRMB_UREP2</name>
<comment type="function">
    <text evidence="2">Catalyzes the formation of N(7)-methylguanine at position 46 (m7G46) in tRNA.</text>
</comment>
<comment type="catalytic activity">
    <reaction evidence="2">
        <text>guanosine(46) in tRNA + S-adenosyl-L-methionine = N(7)-methylguanosine(46) in tRNA + S-adenosyl-L-homocysteine</text>
        <dbReference type="Rhea" id="RHEA:42708"/>
        <dbReference type="Rhea" id="RHEA-COMP:10188"/>
        <dbReference type="Rhea" id="RHEA-COMP:10189"/>
        <dbReference type="ChEBI" id="CHEBI:57856"/>
        <dbReference type="ChEBI" id="CHEBI:59789"/>
        <dbReference type="ChEBI" id="CHEBI:74269"/>
        <dbReference type="ChEBI" id="CHEBI:74480"/>
        <dbReference type="EC" id="2.1.1.33"/>
    </reaction>
</comment>
<comment type="pathway">
    <text evidence="2">tRNA modification; N(7)-methylguanine-tRNA biosynthesis.</text>
</comment>
<comment type="similarity">
    <text evidence="2">Belongs to the class I-like SAM-binding methyltransferase superfamily. TrmB family.</text>
</comment>
<accession>B1AIQ8</accession>
<protein>
    <recommendedName>
        <fullName evidence="2">tRNA (guanine-N(7)-)-methyltransferase</fullName>
        <ecNumber evidence="2">2.1.1.33</ecNumber>
    </recommendedName>
    <alternativeName>
        <fullName evidence="2">tRNA (guanine(46)-N(7))-methyltransferase</fullName>
    </alternativeName>
    <alternativeName>
        <fullName evidence="2">tRNA(m7G46)-methyltransferase</fullName>
    </alternativeName>
</protein>
<evidence type="ECO:0000250" key="1"/>
<evidence type="ECO:0000255" key="2">
    <source>
        <dbReference type="HAMAP-Rule" id="MF_01057"/>
    </source>
</evidence>
<gene>
    <name evidence="2" type="primary">trmB</name>
    <name type="ordered locus">UPA3_0277</name>
</gene>
<organism>
    <name type="scientific">Ureaplasma parvum serovar 3 (strain ATCC 27815 / 27 / NCTC 11736)</name>
    <dbReference type="NCBI Taxonomy" id="505682"/>
    <lineage>
        <taxon>Bacteria</taxon>
        <taxon>Bacillati</taxon>
        <taxon>Mycoplasmatota</taxon>
        <taxon>Mycoplasmoidales</taxon>
        <taxon>Mycoplasmoidaceae</taxon>
        <taxon>Ureaplasma</taxon>
    </lineage>
</organism>